<accession>A1CR85</accession>
<evidence type="ECO:0000250" key="1"/>
<evidence type="ECO:0000255" key="2"/>
<evidence type="ECO:0000305" key="3"/>
<proteinExistence type="inferred from homology"/>
<protein>
    <recommendedName>
        <fullName>Probable beta-glucosidase A</fullName>
        <ecNumber>3.2.1.21</ecNumber>
    </recommendedName>
    <alternativeName>
        <fullName>Beta-D-glucoside glucohydrolase A</fullName>
    </alternativeName>
    <alternativeName>
        <fullName>Cellobiase A</fullName>
    </alternativeName>
    <alternativeName>
        <fullName>Gentiobiase A</fullName>
    </alternativeName>
</protein>
<comment type="function">
    <text evidence="1">Beta-glucosidases are one of a number of cellulolytic enzymes involved in the degradation of cellulosic biomass. Catalyzes the last step releasing glucose from the inhibitory cellobiose (By similarity).</text>
</comment>
<comment type="catalytic activity">
    <reaction>
        <text>Hydrolysis of terminal, non-reducing beta-D-glucosyl residues with release of beta-D-glucose.</text>
        <dbReference type="EC" id="3.2.1.21"/>
    </reaction>
</comment>
<comment type="pathway">
    <text>Glycan metabolism; cellulose degradation.</text>
</comment>
<comment type="subcellular location">
    <subcellularLocation>
        <location evidence="1">Secreted</location>
    </subcellularLocation>
</comment>
<comment type="similarity">
    <text evidence="3">Belongs to the glycosyl hydrolase 3 family.</text>
</comment>
<name>BGLA_ASPCL</name>
<feature type="signal peptide" evidence="2">
    <location>
        <begin position="1"/>
        <end position="18"/>
    </location>
</feature>
<feature type="chain" id="PRO_0000394092" description="Probable beta-glucosidase A">
    <location>
        <begin position="19"/>
        <end position="867"/>
    </location>
</feature>
<feature type="active site" evidence="1">
    <location>
        <position position="287"/>
    </location>
</feature>
<feature type="glycosylation site" description="N-linked (GlcNAc...) asparagine" evidence="2">
    <location>
        <position position="67"/>
    </location>
</feature>
<feature type="glycosylation site" description="N-linked (GlcNAc...) asparagine" evidence="2">
    <location>
        <position position="218"/>
    </location>
</feature>
<feature type="glycosylation site" description="N-linked (GlcNAc...) asparagine" evidence="2">
    <location>
        <position position="259"/>
    </location>
</feature>
<feature type="glycosylation site" description="N-linked (GlcNAc...) asparagine" evidence="2">
    <location>
        <position position="322"/>
    </location>
</feature>
<feature type="glycosylation site" description="N-linked (GlcNAc...) asparagine" evidence="2">
    <location>
        <position position="329"/>
    </location>
</feature>
<feature type="glycosylation site" description="N-linked (GlcNAc...) asparagine" evidence="2">
    <location>
        <position position="361"/>
    </location>
</feature>
<feature type="glycosylation site" description="N-linked (GlcNAc...) asparagine" evidence="2">
    <location>
        <position position="449"/>
    </location>
</feature>
<feature type="glycosylation site" description="N-linked (GlcNAc...) asparagine" evidence="2">
    <location>
        <position position="530"/>
    </location>
</feature>
<feature type="glycosylation site" description="N-linked (GlcNAc...) asparagine" evidence="2">
    <location>
        <position position="549"/>
    </location>
</feature>
<feature type="glycosylation site" description="N-linked (GlcNAc...) asparagine" evidence="2">
    <location>
        <position position="571"/>
    </location>
</feature>
<feature type="glycosylation site" description="N-linked (GlcNAc...) asparagine" evidence="2">
    <location>
        <position position="675"/>
    </location>
</feature>
<feature type="glycosylation site" description="N-linked (GlcNAc...) asparagine" evidence="2">
    <location>
        <position position="719"/>
    </location>
</feature>
<organism>
    <name type="scientific">Aspergillus clavatus (strain ATCC 1007 / CBS 513.65 / DSM 816 / NCTC 3887 / NRRL 1 / QM 1276 / 107)</name>
    <dbReference type="NCBI Taxonomy" id="344612"/>
    <lineage>
        <taxon>Eukaryota</taxon>
        <taxon>Fungi</taxon>
        <taxon>Dikarya</taxon>
        <taxon>Ascomycota</taxon>
        <taxon>Pezizomycotina</taxon>
        <taxon>Eurotiomycetes</taxon>
        <taxon>Eurotiomycetidae</taxon>
        <taxon>Eurotiales</taxon>
        <taxon>Aspergillaceae</taxon>
        <taxon>Aspergillus</taxon>
        <taxon>Aspergillus subgen. Fumigati</taxon>
    </lineage>
</organism>
<gene>
    <name type="primary">bglA</name>
    <name type="synonym">bgl1</name>
    <name type="ORF">ACLA_028810</name>
</gene>
<sequence>MRFSWLEVAVTAASLANANVCIPLFPWYVSSPPFYPSPWANGQGEWAEAHQRAVEIVSQMTLTEKVNLTTGTGWMMEECVGQTGSVPRLGINWGLCGQDSPLGIRFSDLNSAFPAGINVAATWDKTLAYLRGKAMGEEFNDKGIDIQLGPAAGPLGKYPDGGRIWEGFSPDPALTGVLFAETIKGIQDAGVIATAKHYILNEQEQFRQVAEAQGYGYNITETLSSNVDDKTMHELYLWPFADAVRAGVGAIMCSYNQINNSYGCQNSQTLNKLLKAELGFQGFVMSDWSAHHSGVGAALAGLDMSMPGDISFDDGLSFWGANMTVGVLNGTIPAWRVDDMAVRIMTAYYKVGRDRLRVPPNFSSWTRDEYGYEHAAVSEGAWKKVNDFVNVQRDHAQLIREVGSASTVLLKNVGALPLTGKERKVGIFGEDAGSNPWGPNGCENRGCDNGTLAMAWGSGTAEFPYLVTPEQAIQSEVIKNGGNVFPVTHNGALTQMANIASQSSVSLVFVNADAGEGFISVDGNIGDRKNLTLWKNGEEVIKTVASHSNNTVVVIHSVGPILVDEWHDNPNITAILWAGLPGQESGNSIADVLYGRVNPSAKTPFTWGKTRESYGAPLVTKPNNGNGAPQDDFSEGVFIDYRYFDKRNETPVYEFGFGLSYTSFGYSHLRVQPLNGSTYVPATGTTGPAPAYGSIGSAADYLFPEGLKRITKFIYPWLNSTDLKASSADPNYGWEDSEYIPEAATDGSPQPILKAGGAPGGNPTLYHDLVKVSATITNTGNVAGYEVPQLYVSLGGPNEPRVVLRKFDRIHLAPGEQKVWTTTLTRRDLANWDVEAQDWVITKYPKRVYVGSSSRKLPLRAPLPRVQ</sequence>
<keyword id="KW-0119">Carbohydrate metabolism</keyword>
<keyword id="KW-0136">Cellulose degradation</keyword>
<keyword id="KW-0325">Glycoprotein</keyword>
<keyword id="KW-0326">Glycosidase</keyword>
<keyword id="KW-0378">Hydrolase</keyword>
<keyword id="KW-0624">Polysaccharide degradation</keyword>
<keyword id="KW-1185">Reference proteome</keyword>
<keyword id="KW-0964">Secreted</keyword>
<keyword id="KW-0732">Signal</keyword>
<reference key="1">
    <citation type="journal article" date="2008" name="PLoS Genet.">
        <title>Genomic islands in the pathogenic filamentous fungus Aspergillus fumigatus.</title>
        <authorList>
            <person name="Fedorova N.D."/>
            <person name="Khaldi N."/>
            <person name="Joardar V.S."/>
            <person name="Maiti R."/>
            <person name="Amedeo P."/>
            <person name="Anderson M.J."/>
            <person name="Crabtree J."/>
            <person name="Silva J.C."/>
            <person name="Badger J.H."/>
            <person name="Albarraq A."/>
            <person name="Angiuoli S."/>
            <person name="Bussey H."/>
            <person name="Bowyer P."/>
            <person name="Cotty P.J."/>
            <person name="Dyer P.S."/>
            <person name="Egan A."/>
            <person name="Galens K."/>
            <person name="Fraser-Liggett C.M."/>
            <person name="Haas B.J."/>
            <person name="Inman J.M."/>
            <person name="Kent R."/>
            <person name="Lemieux S."/>
            <person name="Malavazi I."/>
            <person name="Orvis J."/>
            <person name="Roemer T."/>
            <person name="Ronning C.M."/>
            <person name="Sundaram J.P."/>
            <person name="Sutton G."/>
            <person name="Turner G."/>
            <person name="Venter J.C."/>
            <person name="White O.R."/>
            <person name="Whitty B.R."/>
            <person name="Youngman P."/>
            <person name="Wolfe K.H."/>
            <person name="Goldman G.H."/>
            <person name="Wortman J.R."/>
            <person name="Jiang B."/>
            <person name="Denning D.W."/>
            <person name="Nierman W.C."/>
        </authorList>
    </citation>
    <scope>NUCLEOTIDE SEQUENCE [LARGE SCALE GENOMIC DNA]</scope>
    <source>
        <strain>ATCC 1007 / CBS 513.65 / DSM 816 / NCTC 3887 / NRRL 1 / QM 1276 / 107</strain>
    </source>
</reference>
<dbReference type="EC" id="3.2.1.21"/>
<dbReference type="EMBL" id="DS027059">
    <property type="protein sequence ID" value="EAW08156.1"/>
    <property type="molecule type" value="Genomic_DNA"/>
</dbReference>
<dbReference type="RefSeq" id="XP_001269582.1">
    <property type="nucleotide sequence ID" value="XM_001269581.1"/>
</dbReference>
<dbReference type="SMR" id="A1CR85"/>
<dbReference type="STRING" id="344612.A1CR85"/>
<dbReference type="GlyCosmos" id="A1CR85">
    <property type="glycosylation" value="12 sites, No reported glycans"/>
</dbReference>
<dbReference type="EnsemblFungi" id="EAW08156">
    <property type="protein sequence ID" value="EAW08156"/>
    <property type="gene ID" value="ACLA_028810"/>
</dbReference>
<dbReference type="GeneID" id="4701004"/>
<dbReference type="KEGG" id="act:ACLA_028810"/>
<dbReference type="VEuPathDB" id="FungiDB:ACLA_028810"/>
<dbReference type="eggNOG" id="ENOG502QR4D">
    <property type="taxonomic scope" value="Eukaryota"/>
</dbReference>
<dbReference type="HOGENOM" id="CLU_004542_2_0_1"/>
<dbReference type="OMA" id="YYPSPWA"/>
<dbReference type="OrthoDB" id="416222at2759"/>
<dbReference type="UniPathway" id="UPA00696"/>
<dbReference type="Proteomes" id="UP000006701">
    <property type="component" value="Unassembled WGS sequence"/>
</dbReference>
<dbReference type="GO" id="GO:0005576">
    <property type="term" value="C:extracellular region"/>
    <property type="evidence" value="ECO:0007669"/>
    <property type="project" value="UniProtKB-SubCell"/>
</dbReference>
<dbReference type="GO" id="GO:0008422">
    <property type="term" value="F:beta-glucosidase activity"/>
    <property type="evidence" value="ECO:0007669"/>
    <property type="project" value="UniProtKB-EC"/>
</dbReference>
<dbReference type="GO" id="GO:0030245">
    <property type="term" value="P:cellulose catabolic process"/>
    <property type="evidence" value="ECO:0007669"/>
    <property type="project" value="UniProtKB-UniPathway"/>
</dbReference>
<dbReference type="FunFam" id="2.60.40.10:FF:001391">
    <property type="entry name" value="Beta-glucosidase"/>
    <property type="match status" value="1"/>
</dbReference>
<dbReference type="FunFam" id="3.20.20.300:FF:000002">
    <property type="entry name" value="Probable beta-glucosidase"/>
    <property type="match status" value="1"/>
</dbReference>
<dbReference type="FunFam" id="3.40.50.1700:FF:000003">
    <property type="entry name" value="Probable beta-glucosidase"/>
    <property type="match status" value="1"/>
</dbReference>
<dbReference type="Gene3D" id="3.40.50.1700">
    <property type="entry name" value="Glycoside hydrolase family 3 C-terminal domain"/>
    <property type="match status" value="1"/>
</dbReference>
<dbReference type="Gene3D" id="3.20.20.300">
    <property type="entry name" value="Glycoside hydrolase, family 3, N-terminal domain"/>
    <property type="match status" value="1"/>
</dbReference>
<dbReference type="Gene3D" id="2.60.40.10">
    <property type="entry name" value="Immunoglobulins"/>
    <property type="match status" value="1"/>
</dbReference>
<dbReference type="InterPro" id="IPR050288">
    <property type="entry name" value="Cellulose_deg_GH3"/>
</dbReference>
<dbReference type="InterPro" id="IPR026891">
    <property type="entry name" value="Fn3-like"/>
</dbReference>
<dbReference type="InterPro" id="IPR019800">
    <property type="entry name" value="Glyco_hydro_3_AS"/>
</dbReference>
<dbReference type="InterPro" id="IPR002772">
    <property type="entry name" value="Glyco_hydro_3_C"/>
</dbReference>
<dbReference type="InterPro" id="IPR036881">
    <property type="entry name" value="Glyco_hydro_3_C_sf"/>
</dbReference>
<dbReference type="InterPro" id="IPR001764">
    <property type="entry name" value="Glyco_hydro_3_N"/>
</dbReference>
<dbReference type="InterPro" id="IPR036962">
    <property type="entry name" value="Glyco_hydro_3_N_sf"/>
</dbReference>
<dbReference type="InterPro" id="IPR017853">
    <property type="entry name" value="Glycoside_hydrolase_SF"/>
</dbReference>
<dbReference type="InterPro" id="IPR013783">
    <property type="entry name" value="Ig-like_fold"/>
</dbReference>
<dbReference type="PANTHER" id="PTHR42715">
    <property type="entry name" value="BETA-GLUCOSIDASE"/>
    <property type="match status" value="1"/>
</dbReference>
<dbReference type="PANTHER" id="PTHR42715:SF29">
    <property type="entry name" value="BETA-GLUCOSIDASE A-RELATED"/>
    <property type="match status" value="1"/>
</dbReference>
<dbReference type="Pfam" id="PF14310">
    <property type="entry name" value="Fn3-like"/>
    <property type="match status" value="1"/>
</dbReference>
<dbReference type="Pfam" id="PF00933">
    <property type="entry name" value="Glyco_hydro_3"/>
    <property type="match status" value="1"/>
</dbReference>
<dbReference type="Pfam" id="PF01915">
    <property type="entry name" value="Glyco_hydro_3_C"/>
    <property type="match status" value="1"/>
</dbReference>
<dbReference type="PRINTS" id="PR00133">
    <property type="entry name" value="GLHYDRLASE3"/>
</dbReference>
<dbReference type="SMART" id="SM01217">
    <property type="entry name" value="Fn3_like"/>
    <property type="match status" value="1"/>
</dbReference>
<dbReference type="SUPFAM" id="SSF51445">
    <property type="entry name" value="(Trans)glycosidases"/>
    <property type="match status" value="1"/>
</dbReference>
<dbReference type="SUPFAM" id="SSF52279">
    <property type="entry name" value="Beta-D-glucan exohydrolase, C-terminal domain"/>
    <property type="match status" value="1"/>
</dbReference>
<dbReference type="PROSITE" id="PS00775">
    <property type="entry name" value="GLYCOSYL_HYDROL_F3"/>
    <property type="match status" value="1"/>
</dbReference>